<protein>
    <recommendedName>
        <fullName>H-2 class II histocompatibility antigen, E-S beta chain</fullName>
    </recommendedName>
</protein>
<organism>
    <name type="scientific">Mus musculus</name>
    <name type="common">Mouse</name>
    <dbReference type="NCBI Taxonomy" id="10090"/>
    <lineage>
        <taxon>Eukaryota</taxon>
        <taxon>Metazoa</taxon>
        <taxon>Chordata</taxon>
        <taxon>Craniata</taxon>
        <taxon>Vertebrata</taxon>
        <taxon>Euteleostomi</taxon>
        <taxon>Mammalia</taxon>
        <taxon>Eutheria</taxon>
        <taxon>Euarchontoglires</taxon>
        <taxon>Glires</taxon>
        <taxon>Rodentia</taxon>
        <taxon>Myomorpha</taxon>
        <taxon>Muroidea</taxon>
        <taxon>Muridae</taxon>
        <taxon>Murinae</taxon>
        <taxon>Mus</taxon>
        <taxon>Mus</taxon>
    </lineage>
</organism>
<keyword id="KW-1064">Adaptive immunity</keyword>
<keyword id="KW-1015">Disulfide bond</keyword>
<keyword id="KW-0325">Glycoprotein</keyword>
<keyword id="KW-0391">Immunity</keyword>
<keyword id="KW-0472">Membrane</keyword>
<keyword id="KW-0491">MHC II</keyword>
<keyword id="KW-1185">Reference proteome</keyword>
<keyword id="KW-0812">Transmembrane</keyword>
<keyword id="KW-1133">Transmembrane helix</keyword>
<keyword id="KW-0832">Ubl conjugation</keyword>
<reference key="1">
    <citation type="journal article" date="1985" name="Proc. Natl. Acad. Sci. U.S.A.">
        <title>Predicted protein sequence of the murine I-E-beta S-polypeptide chain from cDNA and genomic clones.</title>
        <authorList>
            <person name="Mengle-Gaw L."/>
            <person name="McDevitt H.O."/>
        </authorList>
    </citation>
    <scope>NUCLEOTIDE SEQUENCE [MRNA]</scope>
</reference>
<reference key="2">
    <citation type="journal article" date="1987" name="Genet. Res.">
        <title>Nucleotide sequence analysis of class II genes borne by mouse t chromosomes.</title>
        <authorList>
            <person name="Golubic M."/>
            <person name="Budimir O."/>
            <person name="Schoepfer R."/>
            <person name="Kasahara M."/>
            <person name="Mayer W.E."/>
            <person name="Figueroa F."/>
            <person name="Klein J."/>
        </authorList>
    </citation>
    <scope>NUCLEOTIDE SEQUENCE [GENOMIC DNA] OF 81-89</scope>
</reference>
<reference key="3">
    <citation type="journal article" date="2006" name="Immunity">
        <title>Dendritic cells regulate exposure of MHC class II at their plasma membrane by oligoubiquitination.</title>
        <authorList>
            <person name="van Niel G."/>
            <person name="Wubbolts R."/>
            <person name="Ten Broeke T."/>
            <person name="Buschow S.I."/>
            <person name="Ossendorp F.A."/>
            <person name="Melief C.J."/>
            <person name="Raposo G."/>
            <person name="van Balkom B.W."/>
            <person name="Stoorvogel W."/>
        </authorList>
    </citation>
    <scope>UBIQUITINATION</scope>
</reference>
<reference key="4">
    <citation type="journal article" date="2006" name="Nature">
        <title>Surface expression of MHC class II in dendritic cells is controlled by regulated ubiquitination.</title>
        <authorList>
            <person name="Shin J.S."/>
            <person name="Ebersold M."/>
            <person name="Pypaert M."/>
            <person name="Delamarre L."/>
            <person name="Hartley A."/>
            <person name="Mellman I."/>
        </authorList>
    </citation>
    <scope>UBIQUITINATION</scope>
</reference>
<reference key="5">
    <citation type="journal article" date="2010" name="Cell">
        <title>A tissue-specific atlas of mouse protein phosphorylation and expression.</title>
        <authorList>
            <person name="Huttlin E.L."/>
            <person name="Jedrychowski M.P."/>
            <person name="Elias J.E."/>
            <person name="Goswami T."/>
            <person name="Rad R."/>
            <person name="Beausoleil S.A."/>
            <person name="Villen J."/>
            <person name="Haas W."/>
            <person name="Sowa M.E."/>
            <person name="Gygi S.P."/>
        </authorList>
    </citation>
    <scope>IDENTIFICATION BY MASS SPECTROMETRY [LARGE SCALE ANALYSIS]</scope>
    <source>
        <tissue>Spleen</tissue>
    </source>
</reference>
<proteinExistence type="evidence at protein level"/>
<name>HB23_MOUSE</name>
<accession>P04231</accession>
<accession>O78225</accession>
<comment type="subcellular location">
    <subcellularLocation>
        <location evidence="5">Membrane</location>
        <topology evidence="5">Single-pass type I membrane protein</topology>
    </subcellularLocation>
</comment>
<comment type="PTM">
    <text evidence="3 4">Ubiquitinated in immature dendritic cells leading to down-regulation of MHC class II.</text>
</comment>
<comment type="similarity">
    <text evidence="5">Belongs to the MHC class II family.</text>
</comment>
<evidence type="ECO:0000255" key="1"/>
<evidence type="ECO:0000255" key="2">
    <source>
        <dbReference type="PROSITE-ProRule" id="PRU00114"/>
    </source>
</evidence>
<evidence type="ECO:0000269" key="3">
    <source>
    </source>
</evidence>
<evidence type="ECO:0000269" key="4">
    <source>
    </source>
</evidence>
<evidence type="ECO:0000305" key="5"/>
<dbReference type="EMBL" id="M11355">
    <property type="protein sequence ID" value="AAA39644.1"/>
    <property type="molecule type" value="mRNA"/>
</dbReference>
<dbReference type="EMBL" id="L38589">
    <property type="protein sequence ID" value="AAA57293.1"/>
    <property type="molecule type" value="Genomic_DNA"/>
</dbReference>
<dbReference type="PIR" id="A02227">
    <property type="entry name" value="HLMSE2"/>
</dbReference>
<dbReference type="SMR" id="P04231"/>
<dbReference type="GlyCosmos" id="P04231">
    <property type="glycosylation" value="1 site, No reported glycans"/>
</dbReference>
<dbReference type="ProteomicsDB" id="270944"/>
<dbReference type="AGR" id="MGI:95901"/>
<dbReference type="MGI" id="MGI:95901">
    <property type="gene designation" value="H2-Eb1"/>
</dbReference>
<dbReference type="OrthoDB" id="9940220at2759"/>
<dbReference type="ChiTaRS" id="H2-Eb1">
    <property type="organism name" value="mouse"/>
</dbReference>
<dbReference type="Proteomes" id="UP000000589">
    <property type="component" value="Unplaced"/>
</dbReference>
<dbReference type="GO" id="GO:0042613">
    <property type="term" value="C:MHC class II protein complex"/>
    <property type="evidence" value="ECO:0007669"/>
    <property type="project" value="UniProtKB-KW"/>
</dbReference>
<dbReference type="GO" id="GO:0002250">
    <property type="term" value="P:adaptive immune response"/>
    <property type="evidence" value="ECO:0007669"/>
    <property type="project" value="UniProtKB-KW"/>
</dbReference>
<dbReference type="GO" id="GO:0019886">
    <property type="term" value="P:antigen processing and presentation of exogenous peptide antigen via MHC class II"/>
    <property type="evidence" value="ECO:0000314"/>
    <property type="project" value="MGI"/>
</dbReference>
<dbReference type="CDD" id="cd20998">
    <property type="entry name" value="IgC1_MHC_II_beta_I-E"/>
    <property type="match status" value="1"/>
</dbReference>
<dbReference type="FunFam" id="2.60.40.10:FF:000116">
    <property type="entry name" value="HLA class II histocompatibility antigen, DRB1-1 beta chain"/>
    <property type="match status" value="1"/>
</dbReference>
<dbReference type="FunFam" id="3.10.320.10:FF:000001">
    <property type="entry name" value="HLA class II histocompatibility antigen, DRB1-1 beta chain"/>
    <property type="match status" value="1"/>
</dbReference>
<dbReference type="Gene3D" id="3.10.320.10">
    <property type="entry name" value="Class II Histocompatibility Antigen, M Beta Chain, Chain B, domain 1"/>
    <property type="match status" value="1"/>
</dbReference>
<dbReference type="Gene3D" id="2.60.40.10">
    <property type="entry name" value="Immunoglobulins"/>
    <property type="match status" value="1"/>
</dbReference>
<dbReference type="InterPro" id="IPR007110">
    <property type="entry name" value="Ig-like_dom"/>
</dbReference>
<dbReference type="InterPro" id="IPR036179">
    <property type="entry name" value="Ig-like_dom_sf"/>
</dbReference>
<dbReference type="InterPro" id="IPR013783">
    <property type="entry name" value="Ig-like_fold"/>
</dbReference>
<dbReference type="InterPro" id="IPR003006">
    <property type="entry name" value="Ig/MHC_CS"/>
</dbReference>
<dbReference type="InterPro" id="IPR003597">
    <property type="entry name" value="Ig_C1-set"/>
</dbReference>
<dbReference type="InterPro" id="IPR050160">
    <property type="entry name" value="MHC/Immunoglobulin"/>
</dbReference>
<dbReference type="InterPro" id="IPR011162">
    <property type="entry name" value="MHC_I/II-like_Ag-recog"/>
</dbReference>
<dbReference type="InterPro" id="IPR014745">
    <property type="entry name" value="MHC_II_a/b_N"/>
</dbReference>
<dbReference type="InterPro" id="IPR000353">
    <property type="entry name" value="MHC_II_b_N"/>
</dbReference>
<dbReference type="PANTHER" id="PTHR19944:SF99">
    <property type="entry name" value="HLA CLASS II HISTOCOMPATIBILITY ANTIGEN, DRB1 BETA CHAIN"/>
    <property type="match status" value="1"/>
</dbReference>
<dbReference type="PANTHER" id="PTHR19944">
    <property type="entry name" value="MHC CLASS II-RELATED"/>
    <property type="match status" value="1"/>
</dbReference>
<dbReference type="Pfam" id="PF07654">
    <property type="entry name" value="C1-set"/>
    <property type="match status" value="1"/>
</dbReference>
<dbReference type="Pfam" id="PF00969">
    <property type="entry name" value="MHC_II_beta"/>
    <property type="match status" value="1"/>
</dbReference>
<dbReference type="SMART" id="SM00407">
    <property type="entry name" value="IGc1"/>
    <property type="match status" value="1"/>
</dbReference>
<dbReference type="SMART" id="SM00921">
    <property type="entry name" value="MHC_II_beta"/>
    <property type="match status" value="1"/>
</dbReference>
<dbReference type="SUPFAM" id="SSF48726">
    <property type="entry name" value="Immunoglobulin"/>
    <property type="match status" value="1"/>
</dbReference>
<dbReference type="SUPFAM" id="SSF54452">
    <property type="entry name" value="MHC antigen-recognition domain"/>
    <property type="match status" value="1"/>
</dbReference>
<dbReference type="PROSITE" id="PS50835">
    <property type="entry name" value="IG_LIKE"/>
    <property type="match status" value="1"/>
</dbReference>
<dbReference type="PROSITE" id="PS00290">
    <property type="entry name" value="IG_MHC"/>
    <property type="match status" value="1"/>
</dbReference>
<feature type="chain" id="PRO_0000080754" description="H-2 class II histocompatibility antigen, E-S beta chain">
    <location>
        <begin position="1" status="less than"/>
        <end position="232"/>
    </location>
</feature>
<feature type="topological domain" description="Extracellular" evidence="1">
    <location>
        <begin position="1" status="less than"/>
        <end position="193"/>
    </location>
</feature>
<feature type="transmembrane region" description="Helical" evidence="1">
    <location>
        <begin position="194"/>
        <end position="216"/>
    </location>
</feature>
<feature type="topological domain" description="Cytoplasmic" evidence="1">
    <location>
        <begin position="217"/>
        <end position="232"/>
    </location>
</feature>
<feature type="domain" description="Ig-like C1-type">
    <location>
        <begin position="92"/>
        <end position="182"/>
    </location>
</feature>
<feature type="region of interest" description="Beta-1">
    <location>
        <begin position="1" status="less than"/>
        <end position="90"/>
    </location>
</feature>
<feature type="region of interest" description="Beta-2">
    <location>
        <begin position="91"/>
        <end position="193"/>
    </location>
</feature>
<feature type="glycosylation site" description="N-linked (GlcNAc...) asparagine" evidence="1">
    <location>
        <position position="14"/>
    </location>
</feature>
<feature type="disulfide bond" evidence="2">
    <location>
        <begin position="10"/>
        <end position="74"/>
    </location>
</feature>
<feature type="disulfide bond" evidence="2">
    <location>
        <begin position="112"/>
        <end position="168"/>
    </location>
</feature>
<feature type="non-terminal residue">
    <location>
        <position position="1"/>
    </location>
</feature>
<sequence length="232" mass="26647">WFLEYSTSECHFYNGTQRVRLLERYFYNLEENLRFDSDVGEFRAVTELGRPDAENWNSQPEFLEQRRAAVDTYCRHNYEILDKFLVPRRVEPTVTVYPTKTQPLEHHNLLVCSVSDFYPGNIEVRWFRNGKEEKTGIVSTGLVRNGDWTFQTLVMLETVPQSGEVYTCQVEHPSLTDPVTVEWKAQSTSAQNKMLSGVGGFVLGLLFLGAGLFIYFRNQKGQSGLQPTGLLS</sequence>
<gene>
    <name type="primary">H2-Eb1</name>
</gene>